<feature type="chain" id="PRO_0000313146" description="DNA ligase">
    <location>
        <begin position="1"/>
        <end position="696"/>
    </location>
</feature>
<feature type="domain" description="BRCT" evidence="1">
    <location>
        <begin position="618"/>
        <end position="696"/>
    </location>
</feature>
<feature type="active site" description="N6-AMP-lysine intermediate" evidence="1">
    <location>
        <position position="125"/>
    </location>
</feature>
<feature type="binding site" evidence="1">
    <location>
        <begin position="36"/>
        <end position="40"/>
    </location>
    <ligand>
        <name>NAD(+)</name>
        <dbReference type="ChEBI" id="CHEBI:57540"/>
    </ligand>
</feature>
<feature type="binding site" evidence="1">
    <location>
        <begin position="85"/>
        <end position="86"/>
    </location>
    <ligand>
        <name>NAD(+)</name>
        <dbReference type="ChEBI" id="CHEBI:57540"/>
    </ligand>
</feature>
<feature type="binding site" evidence="1">
    <location>
        <position position="123"/>
    </location>
    <ligand>
        <name>NAD(+)</name>
        <dbReference type="ChEBI" id="CHEBI:57540"/>
    </ligand>
</feature>
<feature type="binding site" evidence="1">
    <location>
        <position position="146"/>
    </location>
    <ligand>
        <name>NAD(+)</name>
        <dbReference type="ChEBI" id="CHEBI:57540"/>
    </ligand>
</feature>
<feature type="binding site" evidence="1">
    <location>
        <position position="181"/>
    </location>
    <ligand>
        <name>NAD(+)</name>
        <dbReference type="ChEBI" id="CHEBI:57540"/>
    </ligand>
</feature>
<feature type="binding site" evidence="1">
    <location>
        <position position="319"/>
    </location>
    <ligand>
        <name>NAD(+)</name>
        <dbReference type="ChEBI" id="CHEBI:57540"/>
    </ligand>
</feature>
<feature type="binding site" evidence="1">
    <location>
        <position position="343"/>
    </location>
    <ligand>
        <name>NAD(+)</name>
        <dbReference type="ChEBI" id="CHEBI:57540"/>
    </ligand>
</feature>
<feature type="binding site" evidence="1">
    <location>
        <position position="437"/>
    </location>
    <ligand>
        <name>Zn(2+)</name>
        <dbReference type="ChEBI" id="CHEBI:29105"/>
    </ligand>
</feature>
<feature type="binding site" evidence="1">
    <location>
        <position position="440"/>
    </location>
    <ligand>
        <name>Zn(2+)</name>
        <dbReference type="ChEBI" id="CHEBI:29105"/>
    </ligand>
</feature>
<feature type="binding site" evidence="1">
    <location>
        <position position="455"/>
    </location>
    <ligand>
        <name>Zn(2+)</name>
        <dbReference type="ChEBI" id="CHEBI:29105"/>
    </ligand>
</feature>
<feature type="binding site" evidence="1">
    <location>
        <position position="461"/>
    </location>
    <ligand>
        <name>Zn(2+)</name>
        <dbReference type="ChEBI" id="CHEBI:29105"/>
    </ligand>
</feature>
<name>DNLJ_BORPE</name>
<gene>
    <name evidence="1" type="primary">ligA</name>
    <name type="ordered locus">BP3560</name>
</gene>
<protein>
    <recommendedName>
        <fullName evidence="1">DNA ligase</fullName>
        <ecNumber evidence="1">6.5.1.2</ecNumber>
    </recommendedName>
    <alternativeName>
        <fullName evidence="1">Polydeoxyribonucleotide synthase [NAD(+)]</fullName>
    </alternativeName>
</protein>
<organism>
    <name type="scientific">Bordetella pertussis (strain Tohama I / ATCC BAA-589 / NCTC 13251)</name>
    <dbReference type="NCBI Taxonomy" id="257313"/>
    <lineage>
        <taxon>Bacteria</taxon>
        <taxon>Pseudomonadati</taxon>
        <taxon>Pseudomonadota</taxon>
        <taxon>Betaproteobacteria</taxon>
        <taxon>Burkholderiales</taxon>
        <taxon>Alcaligenaceae</taxon>
        <taxon>Bordetella</taxon>
    </lineage>
</organism>
<keyword id="KW-0227">DNA damage</keyword>
<keyword id="KW-0234">DNA repair</keyword>
<keyword id="KW-0235">DNA replication</keyword>
<keyword id="KW-0436">Ligase</keyword>
<keyword id="KW-0460">Magnesium</keyword>
<keyword id="KW-0464">Manganese</keyword>
<keyword id="KW-0479">Metal-binding</keyword>
<keyword id="KW-0520">NAD</keyword>
<keyword id="KW-1185">Reference proteome</keyword>
<keyword id="KW-0862">Zinc</keyword>
<proteinExistence type="inferred from homology"/>
<reference key="1">
    <citation type="journal article" date="2003" name="Nat. Genet.">
        <title>Comparative analysis of the genome sequences of Bordetella pertussis, Bordetella parapertussis and Bordetella bronchiseptica.</title>
        <authorList>
            <person name="Parkhill J."/>
            <person name="Sebaihia M."/>
            <person name="Preston A."/>
            <person name="Murphy L.D."/>
            <person name="Thomson N.R."/>
            <person name="Harris D.E."/>
            <person name="Holden M.T.G."/>
            <person name="Churcher C.M."/>
            <person name="Bentley S.D."/>
            <person name="Mungall K.L."/>
            <person name="Cerdeno-Tarraga A.-M."/>
            <person name="Temple L."/>
            <person name="James K.D."/>
            <person name="Harris B."/>
            <person name="Quail M.A."/>
            <person name="Achtman M."/>
            <person name="Atkin R."/>
            <person name="Baker S."/>
            <person name="Basham D."/>
            <person name="Bason N."/>
            <person name="Cherevach I."/>
            <person name="Chillingworth T."/>
            <person name="Collins M."/>
            <person name="Cronin A."/>
            <person name="Davis P."/>
            <person name="Doggett J."/>
            <person name="Feltwell T."/>
            <person name="Goble A."/>
            <person name="Hamlin N."/>
            <person name="Hauser H."/>
            <person name="Holroyd S."/>
            <person name="Jagels K."/>
            <person name="Leather S."/>
            <person name="Moule S."/>
            <person name="Norberczak H."/>
            <person name="O'Neil S."/>
            <person name="Ormond D."/>
            <person name="Price C."/>
            <person name="Rabbinowitsch E."/>
            <person name="Rutter S."/>
            <person name="Sanders M."/>
            <person name="Saunders D."/>
            <person name="Seeger K."/>
            <person name="Sharp S."/>
            <person name="Simmonds M."/>
            <person name="Skelton J."/>
            <person name="Squares R."/>
            <person name="Squares S."/>
            <person name="Stevens K."/>
            <person name="Unwin L."/>
            <person name="Whitehead S."/>
            <person name="Barrell B.G."/>
            <person name="Maskell D.J."/>
        </authorList>
    </citation>
    <scope>NUCLEOTIDE SEQUENCE [LARGE SCALE GENOMIC DNA]</scope>
    <source>
        <strain>Tohama I / ATCC BAA-589 / NCTC 13251</strain>
    </source>
</reference>
<evidence type="ECO:0000255" key="1">
    <source>
        <dbReference type="HAMAP-Rule" id="MF_01588"/>
    </source>
</evidence>
<dbReference type="EC" id="6.5.1.2" evidence="1"/>
<dbReference type="EMBL" id="BX640421">
    <property type="protein sequence ID" value="CAE43819.1"/>
    <property type="molecule type" value="Genomic_DNA"/>
</dbReference>
<dbReference type="RefSeq" id="NP_882073.1">
    <property type="nucleotide sequence ID" value="NC_002929.2"/>
</dbReference>
<dbReference type="RefSeq" id="WP_010931538.1">
    <property type="nucleotide sequence ID" value="NZ_CP039022.1"/>
</dbReference>
<dbReference type="SMR" id="Q7VRX7"/>
<dbReference type="STRING" id="257313.BP3560"/>
<dbReference type="PaxDb" id="257313-BP3560"/>
<dbReference type="GeneID" id="69600442"/>
<dbReference type="KEGG" id="bpe:BP3560"/>
<dbReference type="PATRIC" id="fig|257313.5.peg.3853"/>
<dbReference type="eggNOG" id="COG0272">
    <property type="taxonomic scope" value="Bacteria"/>
</dbReference>
<dbReference type="HOGENOM" id="CLU_007764_2_1_4"/>
<dbReference type="Proteomes" id="UP000002676">
    <property type="component" value="Chromosome"/>
</dbReference>
<dbReference type="GO" id="GO:0005829">
    <property type="term" value="C:cytosol"/>
    <property type="evidence" value="ECO:0007669"/>
    <property type="project" value="TreeGrafter"/>
</dbReference>
<dbReference type="GO" id="GO:0003677">
    <property type="term" value="F:DNA binding"/>
    <property type="evidence" value="ECO:0007669"/>
    <property type="project" value="InterPro"/>
</dbReference>
<dbReference type="GO" id="GO:0003911">
    <property type="term" value="F:DNA ligase (NAD+) activity"/>
    <property type="evidence" value="ECO:0007669"/>
    <property type="project" value="UniProtKB-UniRule"/>
</dbReference>
<dbReference type="GO" id="GO:0046872">
    <property type="term" value="F:metal ion binding"/>
    <property type="evidence" value="ECO:0007669"/>
    <property type="project" value="UniProtKB-KW"/>
</dbReference>
<dbReference type="GO" id="GO:0006281">
    <property type="term" value="P:DNA repair"/>
    <property type="evidence" value="ECO:0007669"/>
    <property type="project" value="UniProtKB-KW"/>
</dbReference>
<dbReference type="GO" id="GO:0006260">
    <property type="term" value="P:DNA replication"/>
    <property type="evidence" value="ECO:0007669"/>
    <property type="project" value="UniProtKB-KW"/>
</dbReference>
<dbReference type="CDD" id="cd17748">
    <property type="entry name" value="BRCT_DNA_ligase_like"/>
    <property type="match status" value="1"/>
</dbReference>
<dbReference type="CDD" id="cd00114">
    <property type="entry name" value="LIGANc"/>
    <property type="match status" value="1"/>
</dbReference>
<dbReference type="FunFam" id="1.10.150.20:FF:000006">
    <property type="entry name" value="DNA ligase"/>
    <property type="match status" value="1"/>
</dbReference>
<dbReference type="FunFam" id="1.10.150.20:FF:000007">
    <property type="entry name" value="DNA ligase"/>
    <property type="match status" value="1"/>
</dbReference>
<dbReference type="FunFam" id="1.10.287.610:FF:000002">
    <property type="entry name" value="DNA ligase"/>
    <property type="match status" value="1"/>
</dbReference>
<dbReference type="FunFam" id="2.40.50.140:FF:000012">
    <property type="entry name" value="DNA ligase"/>
    <property type="match status" value="1"/>
</dbReference>
<dbReference type="Gene3D" id="6.20.10.30">
    <property type="match status" value="1"/>
</dbReference>
<dbReference type="Gene3D" id="1.10.150.20">
    <property type="entry name" value="5' to 3' exonuclease, C-terminal subdomain"/>
    <property type="match status" value="2"/>
</dbReference>
<dbReference type="Gene3D" id="3.40.50.10190">
    <property type="entry name" value="BRCT domain"/>
    <property type="match status" value="1"/>
</dbReference>
<dbReference type="Gene3D" id="3.30.470.30">
    <property type="entry name" value="DNA ligase/mRNA capping enzyme"/>
    <property type="match status" value="1"/>
</dbReference>
<dbReference type="Gene3D" id="1.10.287.610">
    <property type="entry name" value="Helix hairpin bin"/>
    <property type="match status" value="1"/>
</dbReference>
<dbReference type="Gene3D" id="2.40.50.140">
    <property type="entry name" value="Nucleic acid-binding proteins"/>
    <property type="match status" value="1"/>
</dbReference>
<dbReference type="HAMAP" id="MF_01588">
    <property type="entry name" value="DNA_ligase_A"/>
    <property type="match status" value="1"/>
</dbReference>
<dbReference type="InterPro" id="IPR001357">
    <property type="entry name" value="BRCT_dom"/>
</dbReference>
<dbReference type="InterPro" id="IPR036420">
    <property type="entry name" value="BRCT_dom_sf"/>
</dbReference>
<dbReference type="InterPro" id="IPR041663">
    <property type="entry name" value="DisA/LigA_HHH"/>
</dbReference>
<dbReference type="InterPro" id="IPR001679">
    <property type="entry name" value="DNA_ligase"/>
</dbReference>
<dbReference type="InterPro" id="IPR018239">
    <property type="entry name" value="DNA_ligase_AS"/>
</dbReference>
<dbReference type="InterPro" id="IPR033136">
    <property type="entry name" value="DNA_ligase_CS"/>
</dbReference>
<dbReference type="InterPro" id="IPR013839">
    <property type="entry name" value="DNAligase_adenylation"/>
</dbReference>
<dbReference type="InterPro" id="IPR013840">
    <property type="entry name" value="DNAligase_N"/>
</dbReference>
<dbReference type="InterPro" id="IPR003583">
    <property type="entry name" value="Hlx-hairpin-Hlx_DNA-bd_motif"/>
</dbReference>
<dbReference type="InterPro" id="IPR012340">
    <property type="entry name" value="NA-bd_OB-fold"/>
</dbReference>
<dbReference type="InterPro" id="IPR004150">
    <property type="entry name" value="NAD_DNA_ligase_OB"/>
</dbReference>
<dbReference type="InterPro" id="IPR010994">
    <property type="entry name" value="RuvA_2-like"/>
</dbReference>
<dbReference type="InterPro" id="IPR004149">
    <property type="entry name" value="Znf_DNAligase_C4"/>
</dbReference>
<dbReference type="NCBIfam" id="TIGR00575">
    <property type="entry name" value="dnlj"/>
    <property type="match status" value="1"/>
</dbReference>
<dbReference type="NCBIfam" id="NF005932">
    <property type="entry name" value="PRK07956.1"/>
    <property type="match status" value="1"/>
</dbReference>
<dbReference type="PANTHER" id="PTHR23389">
    <property type="entry name" value="CHROMOSOME TRANSMISSION FIDELITY FACTOR 18"/>
    <property type="match status" value="1"/>
</dbReference>
<dbReference type="PANTHER" id="PTHR23389:SF9">
    <property type="entry name" value="DNA LIGASE"/>
    <property type="match status" value="1"/>
</dbReference>
<dbReference type="Pfam" id="PF00533">
    <property type="entry name" value="BRCT"/>
    <property type="match status" value="1"/>
</dbReference>
<dbReference type="Pfam" id="PF01653">
    <property type="entry name" value="DNA_ligase_aden"/>
    <property type="match status" value="2"/>
</dbReference>
<dbReference type="Pfam" id="PF03120">
    <property type="entry name" value="DNA_ligase_OB"/>
    <property type="match status" value="1"/>
</dbReference>
<dbReference type="Pfam" id="PF03119">
    <property type="entry name" value="DNA_ligase_ZBD"/>
    <property type="match status" value="1"/>
</dbReference>
<dbReference type="Pfam" id="PF12826">
    <property type="entry name" value="HHH_2"/>
    <property type="match status" value="1"/>
</dbReference>
<dbReference type="Pfam" id="PF14520">
    <property type="entry name" value="HHH_5"/>
    <property type="match status" value="1"/>
</dbReference>
<dbReference type="Pfam" id="PF22745">
    <property type="entry name" value="Nlig-Ia"/>
    <property type="match status" value="1"/>
</dbReference>
<dbReference type="PIRSF" id="PIRSF001604">
    <property type="entry name" value="LigA"/>
    <property type="match status" value="1"/>
</dbReference>
<dbReference type="SMART" id="SM00292">
    <property type="entry name" value="BRCT"/>
    <property type="match status" value="1"/>
</dbReference>
<dbReference type="SMART" id="SM00278">
    <property type="entry name" value="HhH1"/>
    <property type="match status" value="4"/>
</dbReference>
<dbReference type="SMART" id="SM00532">
    <property type="entry name" value="LIGANc"/>
    <property type="match status" value="1"/>
</dbReference>
<dbReference type="SUPFAM" id="SSF52113">
    <property type="entry name" value="BRCT domain"/>
    <property type="match status" value="1"/>
</dbReference>
<dbReference type="SUPFAM" id="SSF56091">
    <property type="entry name" value="DNA ligase/mRNA capping enzyme, catalytic domain"/>
    <property type="match status" value="1"/>
</dbReference>
<dbReference type="SUPFAM" id="SSF50249">
    <property type="entry name" value="Nucleic acid-binding proteins"/>
    <property type="match status" value="1"/>
</dbReference>
<dbReference type="SUPFAM" id="SSF47781">
    <property type="entry name" value="RuvA domain 2-like"/>
    <property type="match status" value="1"/>
</dbReference>
<dbReference type="PROSITE" id="PS50172">
    <property type="entry name" value="BRCT"/>
    <property type="match status" value="1"/>
</dbReference>
<dbReference type="PROSITE" id="PS01055">
    <property type="entry name" value="DNA_LIGASE_N1"/>
    <property type="match status" value="1"/>
</dbReference>
<dbReference type="PROSITE" id="PS01056">
    <property type="entry name" value="DNA_LIGASE_N2"/>
    <property type="match status" value="1"/>
</dbReference>
<accession>Q7VRX7</accession>
<comment type="function">
    <text evidence="1">DNA ligase that catalyzes the formation of phosphodiester linkages between 5'-phosphoryl and 3'-hydroxyl groups in double-stranded DNA using NAD as a coenzyme and as the energy source for the reaction. It is essential for DNA replication and repair of damaged DNA.</text>
</comment>
<comment type="catalytic activity">
    <reaction evidence="1">
        <text>NAD(+) + (deoxyribonucleotide)n-3'-hydroxyl + 5'-phospho-(deoxyribonucleotide)m = (deoxyribonucleotide)n+m + AMP + beta-nicotinamide D-nucleotide.</text>
        <dbReference type="EC" id="6.5.1.2"/>
    </reaction>
</comment>
<comment type="cofactor">
    <cofactor evidence="1">
        <name>Mg(2+)</name>
        <dbReference type="ChEBI" id="CHEBI:18420"/>
    </cofactor>
    <cofactor evidence="1">
        <name>Mn(2+)</name>
        <dbReference type="ChEBI" id="CHEBI:29035"/>
    </cofactor>
</comment>
<comment type="similarity">
    <text evidence="1">Belongs to the NAD-dependent DNA ligase family. LigA subfamily.</text>
</comment>
<sequence length="696" mass="75586">MAQAGPTPQQAIARLRAEIEQHNIRYYVHDDPSVPDAEYDALMRDLQALEAEHPELVTPDSPTQRVGAAPLAEFGSVRHAVPMLSLGNAFDEEDVRAFDKRVADTLRGAGLLGLDQQVEYFCELKLDGLAISLRYEEGRLAQAATRGDGQTGEDVTANIRTIKGVPLRLHGAPRVLEVRGEVLMNRAEFERLNRTQAARGEKVFVNPRNAAAGSLRQLDPRITAQRPLRFFAYSWGEVHGLPEGMPTRFDEPAPGVRVASTLPRDTHGGMLDWLAELGLPVNLRHNHRERGADGLLAFYERIGKLRADLPYDIDGVVYKVDALPSQRVLGFVARAPRFALAHKFPAEEAVTQLLGIEVQVGRTGAITPVARLAPVFVGGVTVTNATLHNEDEIRRKDVRIGDTVIVRRAGDVIPEVVGPVLEKRPADAREFVMLTACPICGSAIERPESEAIARCTGGLFCAAQRKQTLLHAAGRKALDIEGLGEKLIDQLVDADRVKSLADIYSLTAFELAALERMGKKSAENLVAAIDQARRPALGRLLFALGIRHVGETTARDVARHFGSMERIMDASEEALLAVPDVGGVVAGSIRRFFAEPHNREIVEQLTQQGVHPQAEAEPEGTSLAGKTFVLTGTMPNWTRDEATRRILAAGGKVSGSVSKKTAYLVTGEDAGSKLTKAQELGVPVLDEDGLKALLGL</sequence>